<comment type="function">
    <text evidence="1 3">Catalyzes alpha(1-&gt;3) linkage of fucosyl moiety transferred from GDP-beta-L-fucose to N-acetyl glucosamine (GlcNAc) within type 2 lactosamine (LacNAc, beta-D-Gal-(1-&gt;4)-beta-D-GlcNAc-) glycan attached to glycolipids and N- or O-linked glycoproteins. Fucosylates distal type 2 LacNAc and its fucosylated (H-type 2 LacNAc) and sialylated (sialyl-type 2 LacNAc) derivatives to form Lewis x (Lex) (CD15) and Lewis y (Ley) antigenic epitopes involved in cell adhesion and differentiation (By similarity). Generates Lex epitopes in the brain, presumably playing a role in the maintenance of neuronal stemness and neurite outgrowth in progenitor neural cells (By similarity). Fucosylates the internal type 2 LacNAc unit of the polylactosamine chain to form VIM-2 antigen that serves as recognition epitope for SELE (By similarity). Can also modify milk oligosaccharides in particular type 2 tetrasaccharide LNnT (By similarity).</text>
</comment>
<comment type="catalytic activity">
    <reaction evidence="3">
        <text>a beta-D-galactosyl-(1-&gt;4)-N-acetyl-beta-D-glucosaminyl derivative + GDP-beta-L-fucose = a beta-D-galactosyl-(1-&gt;4)-[alpha-L-fucosyl-(1-&gt;3)]-N-acetyl-beta-D-glucosaminyl derivative + GDP + H(+)</text>
        <dbReference type="Rhea" id="RHEA:14257"/>
        <dbReference type="ChEBI" id="CHEBI:15378"/>
        <dbReference type="ChEBI" id="CHEBI:57273"/>
        <dbReference type="ChEBI" id="CHEBI:58189"/>
        <dbReference type="ChEBI" id="CHEBI:133507"/>
        <dbReference type="ChEBI" id="CHEBI:137941"/>
        <dbReference type="EC" id="2.4.1.152"/>
    </reaction>
    <physiologicalReaction direction="left-to-right" evidence="3">
        <dbReference type="Rhea" id="RHEA:14258"/>
    </physiologicalReaction>
</comment>
<comment type="catalytic activity">
    <reaction evidence="3">
        <text>an alpha-Neu5Ac-(2-&gt;3)-beta-D-Gal-(1-&gt;4)-beta-D-GlcNAc-(1-&gt;3)-beta-D-Gal-(1-&gt;4)-beta-D-GlcNAc derivative + GDP-beta-L-fucose = an alpha-Neu5Ac-(2-&gt;3)-beta-D-Gal-(1-&gt;4)-beta-D-GlcNAc-(1-&gt;3)-beta-D-Gal-(1-&gt;4)-[alpha-L-Fuc-(1-&gt;3)]-beta-D-GlcNAc derivative + GDP + H(+)</text>
        <dbReference type="Rhea" id="RHEA:68044"/>
        <dbReference type="ChEBI" id="CHEBI:15378"/>
        <dbReference type="ChEBI" id="CHEBI:57273"/>
        <dbReference type="ChEBI" id="CHEBI:58189"/>
        <dbReference type="ChEBI" id="CHEBI:145343"/>
        <dbReference type="ChEBI" id="CHEBI:176900"/>
    </reaction>
    <physiologicalReaction direction="left-to-right" evidence="3">
        <dbReference type="Rhea" id="RHEA:68045"/>
    </physiologicalReaction>
</comment>
<comment type="catalytic activity">
    <reaction evidence="1">
        <text>alpha-N-glycoloylneuraminosyl-(2-&gt;3)-beta-D-galactosyl-(1-&gt;4)-N-acetyl-beta-D-glucosaminyl-(1-&gt;3)-beta-D-galactosyl-(1-&gt;4)-N-acetyl-beta-D-glucosaminyl-(1-&gt;3)-beta-D-galactosyl-(1-&gt;4)-beta-D-glucosyl-(1&lt;-&gt;1')-ceramide + GDP-beta-L-fucose = alpha-N-glycoloylneuraminosyl-(2-&gt;3)-beta-D-galactosyl-(1-&gt;4)-N-acetyl-beta-D-glucosaminyl-(1-&gt;3)-beta-D-galactosyl-(1-&gt;4)-[alpha-L-fucosyl-(1-&gt;3)]-N-acetyl-beta-D-glucosaminyl-(1-&gt;3)-beta-D-galactosyl-(1-&gt;4)-beta-D-glucosyl-(1&lt;-&gt;1')-ceramide + GDP + H(+)</text>
        <dbReference type="Rhea" id="RHEA:48388"/>
        <dbReference type="ChEBI" id="CHEBI:15378"/>
        <dbReference type="ChEBI" id="CHEBI:57273"/>
        <dbReference type="ChEBI" id="CHEBI:58189"/>
        <dbReference type="ChEBI" id="CHEBI:90383"/>
        <dbReference type="ChEBI" id="CHEBI:90384"/>
    </reaction>
    <physiologicalReaction direction="left-to-right" evidence="1">
        <dbReference type="Rhea" id="RHEA:48389"/>
    </physiologicalReaction>
</comment>
<comment type="catalytic activity">
    <reaction evidence="1">
        <text>alpha-D-galactosyl-(1-&gt;3)-beta-D-galactosyl-(1-&gt;4)-N-acetyl-beta-D-glucosaminyl-(1-&gt;3)-beta-D-galactosyl-(1-&gt;4)-beta-D-glucosyl-(1&lt;-&gt;1')-ceramide + GDP-beta-L-fucose = a neolactoside IV(3)-alpha-Gal,III(3)-alpha-Fuc-nLc4Cer + GDP + H(+)</text>
        <dbReference type="Rhea" id="RHEA:48380"/>
        <dbReference type="ChEBI" id="CHEBI:15378"/>
        <dbReference type="ChEBI" id="CHEBI:57273"/>
        <dbReference type="ChEBI" id="CHEBI:58189"/>
        <dbReference type="ChEBI" id="CHEBI:90380"/>
        <dbReference type="ChEBI" id="CHEBI:90381"/>
    </reaction>
    <physiologicalReaction direction="left-to-right" evidence="1">
        <dbReference type="Rhea" id="RHEA:48381"/>
    </physiologicalReaction>
</comment>
<comment type="catalytic activity">
    <reaction evidence="1">
        <text>a neolactoside nLc4Cer + GDP-beta-L-fucose = a neolactoside III(3)-alpha-Fuc-nLc4Cer + GDP + H(+)</text>
        <dbReference type="Rhea" id="RHEA:48376"/>
        <dbReference type="ChEBI" id="CHEBI:15378"/>
        <dbReference type="ChEBI" id="CHEBI:57273"/>
        <dbReference type="ChEBI" id="CHEBI:58189"/>
        <dbReference type="ChEBI" id="CHEBI:90376"/>
        <dbReference type="ChEBI" id="CHEBI:90379"/>
    </reaction>
    <physiologicalReaction direction="left-to-right" evidence="1">
        <dbReference type="Rhea" id="RHEA:48377"/>
    </physiologicalReaction>
</comment>
<comment type="catalytic activity">
    <reaction evidence="3">
        <text>an N-acetyl-alpha-neuraminyl-(2-&gt;3)-beta-D-galactosyl-(1-&gt;4)-N-acetyl-beta-D-glucosaminyl derivative + GDP-beta-L-fucose = an alpha-Neu5Ac-(2-&gt;3)-beta-D-Gal-(1-&gt;4)-[alpha-L-Fuc-(1-&gt;3)]-beta-D-GlcNAc derivative + GDP + H(+)</text>
        <dbReference type="Rhea" id="RHEA:56076"/>
        <dbReference type="ChEBI" id="CHEBI:15378"/>
        <dbReference type="ChEBI" id="CHEBI:57273"/>
        <dbReference type="ChEBI" id="CHEBI:58189"/>
        <dbReference type="ChEBI" id="CHEBI:136545"/>
        <dbReference type="ChEBI" id="CHEBI:139509"/>
    </reaction>
    <physiologicalReaction direction="left-to-right" evidence="3">
        <dbReference type="Rhea" id="RHEA:56077"/>
    </physiologicalReaction>
</comment>
<comment type="catalytic activity">
    <reaction evidence="3">
        <text>beta-D-Gal-(1-&gt;4)-beta-D-GlcNAc-(1-&gt;3)-beta-D-Gal-(1-&gt;4)-D-Glc + GDP-beta-L-fucose = beta-D-Gal-(1-&gt;4)-[alpha-L-Fuc-(1-&gt;3)]-beta-D-GlcNAc-(1-&gt;3)-beta-D-Gal-(1-&gt;4)-D-Glc + GDP + H(+)</text>
        <dbReference type="Rhea" id="RHEA:77187"/>
        <dbReference type="ChEBI" id="CHEBI:15378"/>
        <dbReference type="ChEBI" id="CHEBI:57273"/>
        <dbReference type="ChEBI" id="CHEBI:58189"/>
        <dbReference type="ChEBI" id="CHEBI:60239"/>
        <dbReference type="ChEBI" id="CHEBI:61352"/>
    </reaction>
    <physiologicalReaction direction="left-to-right" evidence="3">
        <dbReference type="Rhea" id="RHEA:77188"/>
    </physiologicalReaction>
</comment>
<comment type="catalytic activity">
    <reaction evidence="3">
        <text>an alpha-L-Fuc-(1-&gt;2)-beta-D-Gal-(1-&gt;4)-beta-D-GlcNAc derivative + GDP-beta-L-fucose = an alpha-L-Fuc-(1-&gt;2)-beta-D-Gal-(1-&gt;4)-[alpha-L-Fuc-(1-&gt;3)]-beta-D-GlcNAc derivative + GDP + H(+)</text>
        <dbReference type="Rhea" id="RHEA:77191"/>
        <dbReference type="ChEBI" id="CHEBI:15378"/>
        <dbReference type="ChEBI" id="CHEBI:57273"/>
        <dbReference type="ChEBI" id="CHEBI:58189"/>
        <dbReference type="ChEBI" id="CHEBI:133510"/>
        <dbReference type="ChEBI" id="CHEBI:195560"/>
    </reaction>
    <physiologicalReaction direction="left-to-right" evidence="3">
        <dbReference type="Rhea" id="RHEA:77192"/>
    </physiologicalReaction>
</comment>
<comment type="activity regulation">
    <text evidence="3">Activated by Mn2+.</text>
</comment>
<comment type="pathway">
    <text evidence="1 3">Protein modification; protein glycosylation.</text>
</comment>
<comment type="pathway">
    <text evidence="1">Glycolipid biosynthesis.</text>
</comment>
<comment type="subunit">
    <text evidence="3">Homodimer.</text>
</comment>
<comment type="subcellular location">
    <subcellularLocation>
        <location evidence="3">Golgi apparatus</location>
        <location evidence="3">trans-Golgi network membrane</location>
        <topology evidence="2">Single-pass type II membrane protein</topology>
    </subcellularLocation>
    <subcellularLocation>
        <location evidence="1">Golgi apparatus membrane</location>
    </subcellularLocation>
</comment>
<comment type="domain">
    <text evidence="3">The donor-binding domain adopts a Rossman-like fold involved in GDP-beta-L-fucose sugar donor interactions.</text>
</comment>
<comment type="domain">
    <text evidence="3">The acceptor-binding domain adopts a Rossman-like fold consisting of six-stranded parallel beta sheets characteristic of the Toll/interleukin-1 receptor (TIR) fold family. Interacts with the LacNAc unit of type 2 LacNAc and H-type 2 LacNAc structures. It contains the catalytic base Glu-137 which deprotonates the hydroxyl group of GlcNAc while forming bridging interactions with the donor sugar to position the catalytic machinery in the active site.</text>
</comment>
<comment type="PTM">
    <text evidence="3">N-glycosylated with complex-type N-glycans.</text>
</comment>
<comment type="similarity">
    <text evidence="6">Belongs to the glycosyltransferase 10 family.</text>
</comment>
<name>FUT9_CRIGR</name>
<protein>
    <recommendedName>
        <fullName evidence="3">4-galactosyl-N-acetylglucosaminide 3-alpha-L-fucosyltransferase 9</fullName>
        <ecNumber evidence="3">2.4.1.152</ecNumber>
    </recommendedName>
    <alternativeName>
        <fullName evidence="3">Fucosyltransferase 9</fullName>
    </alternativeName>
    <alternativeName>
        <fullName evidence="5">Fucosyltransferase IX</fullName>
        <shortName evidence="5">Fuc-TIX</shortName>
        <shortName>FucT-IX</shortName>
    </alternativeName>
    <alternativeName>
        <fullName>Galactoside 3-L-fucosyltransferase</fullName>
    </alternativeName>
</protein>
<proteinExistence type="evidence at transcript level"/>
<reference key="1">
    <citation type="journal article" date="2000" name="Arch. Biochem. Biophys.">
        <title>Alpha(1,3)fucosyltransferases expressed by the gain-of-function Chinese hamster ovary glycosylation mutants LEC12, LEC29, and LEC30.</title>
        <authorList>
            <person name="Patnaik S.K."/>
            <person name="Zhang A."/>
            <person name="Shi S."/>
            <person name="Stanley P."/>
        </authorList>
    </citation>
    <scope>NUCLEOTIDE SEQUENCE [MRNA]</scope>
</reference>
<reference key="2">
    <citation type="submission" date="2004-05" db="EMBL/GenBank/DDBJ databases">
        <authorList>
            <person name="Patnaik S.K."/>
            <person name="Potvin B."/>
            <person name="Stanley P."/>
        </authorList>
    </citation>
    <scope>NUCLEOTIDE SEQUENCE [MRNA]</scope>
</reference>
<dbReference type="EC" id="2.4.1.152" evidence="3"/>
<dbReference type="EMBL" id="AF230460">
    <property type="protein sequence ID" value="AAF82412.1"/>
    <property type="molecule type" value="mRNA"/>
</dbReference>
<dbReference type="EMBL" id="AY628212">
    <property type="protein sequence ID" value="AAT47342.1"/>
    <property type="molecule type" value="mRNA"/>
</dbReference>
<dbReference type="EMBL" id="AY628213">
    <property type="protein sequence ID" value="AAT47343.1"/>
    <property type="molecule type" value="mRNA"/>
</dbReference>
<dbReference type="RefSeq" id="NP_001230953.1">
    <property type="nucleotide sequence ID" value="NM_001244024.1"/>
</dbReference>
<dbReference type="SMR" id="Q9JIG1"/>
<dbReference type="CAZy" id="GT10">
    <property type="family name" value="Glycosyltransferase Family 10"/>
</dbReference>
<dbReference type="GlyCosmos" id="Q9JIG1">
    <property type="glycosylation" value="3 sites, No reported glycans"/>
</dbReference>
<dbReference type="PaxDb" id="10029-NP_001230953.1"/>
<dbReference type="Ensembl" id="ENSCGRT00001008589.1">
    <property type="protein sequence ID" value="ENSCGRP00001005567.1"/>
    <property type="gene ID" value="ENSCGRG00001007342.1"/>
</dbReference>
<dbReference type="GeneID" id="100689036"/>
<dbReference type="KEGG" id="cge:100689036"/>
<dbReference type="CTD" id="10690"/>
<dbReference type="eggNOG" id="KOG2619">
    <property type="taxonomic scope" value="Eukaryota"/>
</dbReference>
<dbReference type="GeneTree" id="ENSGT00940000155095"/>
<dbReference type="OrthoDB" id="427096at2759"/>
<dbReference type="UniPathway" id="UPA00378"/>
<dbReference type="Proteomes" id="UP000694386">
    <property type="component" value="Unplaced"/>
</dbReference>
<dbReference type="Proteomes" id="UP001108280">
    <property type="component" value="Chromosome 2"/>
</dbReference>
<dbReference type="GO" id="GO:0005794">
    <property type="term" value="C:Golgi apparatus"/>
    <property type="evidence" value="ECO:0000250"/>
    <property type="project" value="UniProtKB"/>
</dbReference>
<dbReference type="GO" id="GO:0000139">
    <property type="term" value="C:Golgi membrane"/>
    <property type="evidence" value="ECO:0007669"/>
    <property type="project" value="UniProtKB-SubCell"/>
</dbReference>
<dbReference type="GO" id="GO:0005802">
    <property type="term" value="C:trans-Golgi network"/>
    <property type="evidence" value="ECO:0000250"/>
    <property type="project" value="UniProtKB"/>
</dbReference>
<dbReference type="GO" id="GO:0032588">
    <property type="term" value="C:trans-Golgi network membrane"/>
    <property type="evidence" value="ECO:0000250"/>
    <property type="project" value="UniProtKB"/>
</dbReference>
<dbReference type="GO" id="GO:0017083">
    <property type="term" value="F:4-galactosyl-N-acetylglucosaminide 3-alpha-L-fucosyltransferase activity"/>
    <property type="evidence" value="ECO:0000250"/>
    <property type="project" value="UniProtKB"/>
</dbReference>
<dbReference type="GO" id="GO:0042803">
    <property type="term" value="F:protein homodimerization activity"/>
    <property type="evidence" value="ECO:0000250"/>
    <property type="project" value="UniProtKB"/>
</dbReference>
<dbReference type="GO" id="GO:0036065">
    <property type="term" value="P:fucosylation"/>
    <property type="evidence" value="ECO:0000250"/>
    <property type="project" value="UniProtKB"/>
</dbReference>
<dbReference type="GO" id="GO:0006688">
    <property type="term" value="P:glycosphingolipid biosynthetic process"/>
    <property type="evidence" value="ECO:0000250"/>
    <property type="project" value="UniProtKB"/>
</dbReference>
<dbReference type="GO" id="GO:0106402">
    <property type="term" value="P:Lewis x epitope biosynthetic process"/>
    <property type="evidence" value="ECO:0000250"/>
    <property type="project" value="UniProtKB"/>
</dbReference>
<dbReference type="GO" id="GO:0036071">
    <property type="term" value="P:N-glycan fucosylation"/>
    <property type="evidence" value="ECO:0007669"/>
    <property type="project" value="Ensembl"/>
</dbReference>
<dbReference type="GO" id="GO:0030182">
    <property type="term" value="P:neuron differentiation"/>
    <property type="evidence" value="ECO:0000250"/>
    <property type="project" value="UniProtKB"/>
</dbReference>
<dbReference type="GO" id="GO:0036445">
    <property type="term" value="P:neuronal stem cell division"/>
    <property type="evidence" value="ECO:0000250"/>
    <property type="project" value="UniProtKB"/>
</dbReference>
<dbReference type="GO" id="GO:0009312">
    <property type="term" value="P:oligosaccharide biosynthetic process"/>
    <property type="evidence" value="ECO:0007669"/>
    <property type="project" value="Ensembl"/>
</dbReference>
<dbReference type="GO" id="GO:0000271">
    <property type="term" value="P:polysaccharide biosynthetic process"/>
    <property type="evidence" value="ECO:0000250"/>
    <property type="project" value="UniProtKB"/>
</dbReference>
<dbReference type="GO" id="GO:0010976">
    <property type="term" value="P:positive regulation of neuron projection development"/>
    <property type="evidence" value="ECO:0000250"/>
    <property type="project" value="UniProtKB"/>
</dbReference>
<dbReference type="GO" id="GO:0006487">
    <property type="term" value="P:protein N-linked glycosylation"/>
    <property type="evidence" value="ECO:0000250"/>
    <property type="project" value="UniProtKB"/>
</dbReference>
<dbReference type="GO" id="GO:0006493">
    <property type="term" value="P:protein O-linked glycosylation"/>
    <property type="evidence" value="ECO:0000250"/>
    <property type="project" value="UniProtKB"/>
</dbReference>
<dbReference type="GO" id="GO:1903037">
    <property type="term" value="P:regulation of leukocyte cell-cell adhesion"/>
    <property type="evidence" value="ECO:0000250"/>
    <property type="project" value="UniProtKB"/>
</dbReference>
<dbReference type="GO" id="GO:1903236">
    <property type="term" value="P:regulation of leukocyte tethering or rolling"/>
    <property type="evidence" value="ECO:0000250"/>
    <property type="project" value="UniProtKB"/>
</dbReference>
<dbReference type="FunFam" id="3.40.50.11660:FF:000001">
    <property type="entry name" value="alpha-(1,3)-fucosyltransferase 9"/>
    <property type="match status" value="1"/>
</dbReference>
<dbReference type="Gene3D" id="3.40.50.11660">
    <property type="entry name" value="Glycosyl transferase family 10, C-terminal domain"/>
    <property type="match status" value="1"/>
</dbReference>
<dbReference type="InterPro" id="IPR055270">
    <property type="entry name" value="Glyco_tran_10_C"/>
</dbReference>
<dbReference type="InterPro" id="IPR031481">
    <property type="entry name" value="Glyco_tran_10_N"/>
</dbReference>
<dbReference type="InterPro" id="IPR001503">
    <property type="entry name" value="Glyco_trans_10"/>
</dbReference>
<dbReference type="InterPro" id="IPR038577">
    <property type="entry name" value="GT10-like_C_sf"/>
</dbReference>
<dbReference type="PANTHER" id="PTHR11929:SF10">
    <property type="entry name" value="4-GALACTOSYL-N-ACETYLGLUCOSAMINIDE 3-ALPHA-L-FUCOSYLTRANSFERASE 9"/>
    <property type="match status" value="1"/>
</dbReference>
<dbReference type="PANTHER" id="PTHR11929">
    <property type="entry name" value="ALPHA- 1,3 -FUCOSYLTRANSFERASE"/>
    <property type="match status" value="1"/>
</dbReference>
<dbReference type="Pfam" id="PF17039">
    <property type="entry name" value="Glyco_tran_10_N"/>
    <property type="match status" value="1"/>
</dbReference>
<dbReference type="Pfam" id="PF00852">
    <property type="entry name" value="Glyco_transf_10"/>
    <property type="match status" value="1"/>
</dbReference>
<dbReference type="SUPFAM" id="SSF53756">
    <property type="entry name" value="UDP-Glycosyltransferase/glycogen phosphorylase"/>
    <property type="match status" value="1"/>
</dbReference>
<organism>
    <name type="scientific">Cricetulus griseus</name>
    <name type="common">Chinese hamster</name>
    <name type="synonym">Cricetulus barabensis griseus</name>
    <dbReference type="NCBI Taxonomy" id="10029"/>
    <lineage>
        <taxon>Eukaryota</taxon>
        <taxon>Metazoa</taxon>
        <taxon>Chordata</taxon>
        <taxon>Craniata</taxon>
        <taxon>Vertebrata</taxon>
        <taxon>Euteleostomi</taxon>
        <taxon>Mammalia</taxon>
        <taxon>Eutheria</taxon>
        <taxon>Euarchontoglires</taxon>
        <taxon>Glires</taxon>
        <taxon>Rodentia</taxon>
        <taxon>Myomorpha</taxon>
        <taxon>Muroidea</taxon>
        <taxon>Cricetidae</taxon>
        <taxon>Cricetinae</taxon>
        <taxon>Cricetulus</taxon>
    </lineage>
</organism>
<evidence type="ECO:0000250" key="1">
    <source>
        <dbReference type="UniProtKB" id="O88819"/>
    </source>
</evidence>
<evidence type="ECO:0000250" key="2">
    <source>
        <dbReference type="UniProtKB" id="Q6P4F1"/>
    </source>
</evidence>
<evidence type="ECO:0000250" key="3">
    <source>
        <dbReference type="UniProtKB" id="Q9Y231"/>
    </source>
</evidence>
<evidence type="ECO:0000255" key="4"/>
<evidence type="ECO:0000303" key="5">
    <source>
    </source>
</evidence>
<evidence type="ECO:0000305" key="6"/>
<gene>
    <name evidence="3" type="primary">FUT9</name>
</gene>
<accession>Q9JIG1</accession>
<sequence>MTSTSKGILRPFLIVCVILACFMACLLIYIKPTNSWVFSPMESASSVLKMKNFFSTKTDYFNETTILVWVWPFGQTFDLTSCQAMFNIQGCHLTTDRSLYNKSHAVLIHHRDISWDLTNLPQQARPPFQKWIWMNLESPTHTPQKSGIEHLFNLTLTYRRDSDIQVPYGFLTVSTNPFVFEVPSKEKLVCWVVSNWNPEHARVKYYNELSKSIEIHTYGQAFGEYVNEKNLIPTISTCKFYLSFENSIHKDYITEKLYNAFLAGSVPVVLGPSRENYENYIPADSFIHVEDYNSPSELAKYLKEVDKNNKLYLSYFNWRKDFTVNLPRFWESHACLACDHVKRHQEYKSVGNLEKWFWN</sequence>
<feature type="chain" id="PRO_0000221117" description="4-galactosyl-N-acetylglucosaminide 3-alpha-L-fucosyltransferase 9">
    <location>
        <begin position="1"/>
        <end position="359"/>
    </location>
</feature>
<feature type="topological domain" description="Cytoplasmic" evidence="4">
    <location>
        <begin position="1"/>
        <end position="11"/>
    </location>
</feature>
<feature type="transmembrane region" description="Helical; Signal-anchor for type II membrane protein" evidence="4">
    <location>
        <begin position="12"/>
        <end position="32"/>
    </location>
</feature>
<feature type="topological domain" description="Lumenal" evidence="4">
    <location>
        <begin position="33"/>
        <end position="359"/>
    </location>
</feature>
<feature type="region of interest" description="Acceptor-binding" evidence="3">
    <location>
        <begin position="63"/>
        <end position="168"/>
    </location>
</feature>
<feature type="region of interest" description="Donor-binding" evidence="3">
    <location>
        <begin position="169"/>
        <end position="326"/>
    </location>
</feature>
<feature type="region of interest" description="Acceptor-binding" evidence="3">
    <location>
        <begin position="327"/>
        <end position="359"/>
    </location>
</feature>
<feature type="active site" description="Nucleophile" evidence="3">
    <location>
        <position position="137"/>
    </location>
</feature>
<feature type="binding site" evidence="3">
    <location>
        <position position="75"/>
    </location>
    <ligand>
        <name>a beta-D-galactosyl-(1-&gt;4)-N-acetyl-beta-D-glucosaminyl derivative</name>
        <dbReference type="ChEBI" id="CHEBI:133507"/>
    </ligand>
</feature>
<feature type="binding site" evidence="3">
    <location>
        <position position="137"/>
    </location>
    <ligand>
        <name>a beta-D-galactosyl-(1-&gt;4)-N-acetyl-beta-D-glucosaminyl derivative</name>
        <dbReference type="ChEBI" id="CHEBI:133507"/>
    </ligand>
</feature>
<feature type="binding site" evidence="3">
    <location>
        <position position="137"/>
    </location>
    <ligand>
        <name>GDP-beta-L-fucose</name>
        <dbReference type="ChEBI" id="CHEBI:57273"/>
    </ligand>
</feature>
<feature type="binding site" evidence="3">
    <location>
        <position position="168"/>
    </location>
    <ligand>
        <name>GDP-beta-L-fucose</name>
        <dbReference type="ChEBI" id="CHEBI:57273"/>
    </ligand>
</feature>
<feature type="binding site" evidence="3">
    <location>
        <position position="192"/>
    </location>
    <ligand>
        <name>GDP-beta-L-fucose</name>
        <dbReference type="ChEBI" id="CHEBI:57273"/>
    </ligand>
</feature>
<feature type="binding site" evidence="3">
    <location>
        <position position="194"/>
    </location>
    <ligand>
        <name>GDP-beta-L-fucose</name>
        <dbReference type="ChEBI" id="CHEBI:57273"/>
    </ligand>
</feature>
<feature type="binding site" evidence="3">
    <location>
        <position position="195"/>
    </location>
    <ligand>
        <name>GDP-beta-L-fucose</name>
        <dbReference type="ChEBI" id="CHEBI:57273"/>
    </ligand>
</feature>
<feature type="binding site" evidence="3">
    <location>
        <position position="202"/>
    </location>
    <ligand>
        <name>GDP-beta-L-fucose</name>
        <dbReference type="ChEBI" id="CHEBI:57273"/>
    </ligand>
</feature>
<feature type="binding site" evidence="3">
    <location>
        <position position="226"/>
    </location>
    <ligand>
        <name>GDP-beta-L-fucose</name>
        <dbReference type="ChEBI" id="CHEBI:57273"/>
    </ligand>
</feature>
<feature type="binding site" evidence="3">
    <location>
        <position position="241"/>
    </location>
    <ligand>
        <name>GDP-beta-L-fucose</name>
        <dbReference type="ChEBI" id="CHEBI:57273"/>
    </ligand>
</feature>
<feature type="binding site" evidence="3">
    <location>
        <position position="246"/>
    </location>
    <ligand>
        <name>GDP-beta-L-fucose</name>
        <dbReference type="ChEBI" id="CHEBI:57273"/>
    </ligand>
</feature>
<feature type="binding site" evidence="3">
    <location>
        <position position="252"/>
    </location>
    <ligand>
        <name>GDP-beta-L-fucose</name>
        <dbReference type="ChEBI" id="CHEBI:57273"/>
    </ligand>
</feature>
<feature type="binding site" evidence="3">
    <location>
        <position position="255"/>
    </location>
    <ligand>
        <name>GDP-beta-L-fucose</name>
        <dbReference type="ChEBI" id="CHEBI:57273"/>
    </ligand>
</feature>
<feature type="binding site" evidence="3">
    <location>
        <position position="256"/>
    </location>
    <ligand>
        <name>GDP-beta-L-fucose</name>
        <dbReference type="ChEBI" id="CHEBI:57273"/>
    </ligand>
</feature>
<feature type="glycosylation site" description="N-linked (GlcNAc...) asparagine" evidence="4">
    <location>
        <position position="62"/>
    </location>
</feature>
<feature type="glycosylation site" description="N-linked (GlcNAc...) asparagine" evidence="4">
    <location>
        <position position="101"/>
    </location>
</feature>
<feature type="glycosylation site" description="N-linked (GlcNAc...) asparagine" evidence="3 4">
    <location>
        <position position="153"/>
    </location>
</feature>
<feature type="disulfide bond" evidence="3">
    <location>
        <begin position="82"/>
        <end position="335"/>
    </location>
</feature>
<feature type="disulfide bond" evidence="3">
    <location>
        <begin position="91"/>
        <end position="338"/>
    </location>
</feature>
<feature type="disulfide bond" evidence="3">
    <location>
        <begin position="190"/>
        <end position="238"/>
    </location>
</feature>
<keyword id="KW-1015">Disulfide bond</keyword>
<keyword id="KW-0325">Glycoprotein</keyword>
<keyword id="KW-0328">Glycosyltransferase</keyword>
<keyword id="KW-0333">Golgi apparatus</keyword>
<keyword id="KW-0443">Lipid metabolism</keyword>
<keyword id="KW-0472">Membrane</keyword>
<keyword id="KW-0735">Signal-anchor</keyword>
<keyword id="KW-0808">Transferase</keyword>
<keyword id="KW-0812">Transmembrane</keyword>
<keyword id="KW-1133">Transmembrane helix</keyword>